<comment type="sequence caution" evidence="1">
    <conflict type="erroneous initiation">
        <sequence resource="EMBL-CDS" id="AAA66899"/>
    </conflict>
</comment>
<proteinExistence type="predicted"/>
<evidence type="ECO:0000305" key="1"/>
<feature type="chain" id="PRO_0000202894" description="Putative uncharacterized protein YHR050W-A">
    <location>
        <begin position="1"/>
        <end position="56"/>
    </location>
</feature>
<protein>
    <recommendedName>
        <fullName>Putative uncharacterized protein YHR050W-A</fullName>
    </recommendedName>
</protein>
<name>YH50_YEAST</name>
<dbReference type="EMBL" id="X14452">
    <property type="protein sequence ID" value="CAA32621.1"/>
    <property type="molecule type" value="Genomic_DNA"/>
</dbReference>
<dbReference type="EMBL" id="M10138">
    <property type="protein sequence ID" value="AAA66899.1"/>
    <property type="status" value="ALT_INIT"/>
    <property type="molecule type" value="Genomic_DNA"/>
</dbReference>
<dbReference type="EMBL" id="U00062">
    <property type="status" value="NOT_ANNOTATED_CDS"/>
    <property type="molecule type" value="Genomic_DNA"/>
</dbReference>
<dbReference type="EMBL" id="BK006934">
    <property type="protein sequence ID" value="DAA06743.1"/>
    <property type="molecule type" value="Genomic_DNA"/>
</dbReference>
<dbReference type="RefSeq" id="NP_878088.1">
    <property type="nucleotide sequence ID" value="NM_001184652.1"/>
</dbReference>
<dbReference type="BioGRID" id="37070">
    <property type="interactions" value="322"/>
</dbReference>
<dbReference type="FunCoup" id="Q05451">
    <property type="interactions" value="15"/>
</dbReference>
<dbReference type="STRING" id="4932.YHR050W-A"/>
<dbReference type="PaxDb" id="4932-YHR050W-A"/>
<dbReference type="EnsemblFungi" id="YHR050W-A_mRNA">
    <property type="protein sequence ID" value="YHR050W-A"/>
    <property type="gene ID" value="YHR050W-A"/>
</dbReference>
<dbReference type="GeneID" id="1466528"/>
<dbReference type="KEGG" id="sce:YHR050W-A"/>
<dbReference type="AGR" id="SGD:S000028832"/>
<dbReference type="SGD" id="S000028832">
    <property type="gene designation" value="YHR050W-A"/>
</dbReference>
<dbReference type="VEuPathDB" id="FungiDB:YHR050W-A"/>
<dbReference type="HOGENOM" id="CLU_3015482_0_0_1"/>
<dbReference type="InParanoid" id="Q05451"/>
<dbReference type="BioCyc" id="YEAST:G3O-31278-MONOMER"/>
<dbReference type="BioGRID-ORCS" id="1466528">
    <property type="hits" value="0 hits in 10 CRISPR screens"/>
</dbReference>
<dbReference type="PRO" id="PR:Q05451"/>
<dbReference type="Proteomes" id="UP000002311">
    <property type="component" value="Chromosome VIII"/>
</dbReference>
<dbReference type="RNAct" id="Q05451">
    <property type="molecule type" value="protein"/>
</dbReference>
<accession>Q05451</accession>
<accession>D3DKZ9</accession>
<accession>Q05449</accession>
<organism>
    <name type="scientific">Saccharomyces cerevisiae (strain ATCC 204508 / S288c)</name>
    <name type="common">Baker's yeast</name>
    <dbReference type="NCBI Taxonomy" id="559292"/>
    <lineage>
        <taxon>Eukaryota</taxon>
        <taxon>Fungi</taxon>
        <taxon>Dikarya</taxon>
        <taxon>Ascomycota</taxon>
        <taxon>Saccharomycotina</taxon>
        <taxon>Saccharomycetes</taxon>
        <taxon>Saccharomycetales</taxon>
        <taxon>Saccharomycetaceae</taxon>
        <taxon>Saccharomyces</taxon>
    </lineage>
</organism>
<reference key="1">
    <citation type="journal article" date="1989" name="Nucleic Acids Res.">
        <title>Organization and expression of the COX6 genetic locus in Saccharomyces cerevisiae: multiple mRNAs with different 3' termini are transcribed from COX6 and regulated differentially.</title>
        <authorList>
            <person name="Wright R.M."/>
            <person name="Rosenzweig B."/>
            <person name="Poyton R.O."/>
        </authorList>
    </citation>
    <scope>NUCLEOTIDE SEQUENCE [GENOMIC DNA]</scope>
</reference>
<reference key="2">
    <citation type="journal article" date="1984" name="J. Biol. Chem.">
        <title>Isolation and sequence of the structural gene for cytochrome c oxidase subunit VI from Saccharomyces cerevisiae.</title>
        <authorList>
            <person name="Wright R.M."/>
            <person name="Ko C."/>
            <person name="Cumsky M.G."/>
            <person name="Poyton R.O."/>
        </authorList>
    </citation>
    <scope>NUCLEOTIDE SEQUENCE [GENOMIC DNA]</scope>
</reference>
<reference key="3">
    <citation type="journal article" date="1994" name="Science">
        <title>Complete nucleotide sequence of Saccharomyces cerevisiae chromosome VIII.</title>
        <authorList>
            <person name="Johnston M."/>
            <person name="Andrews S."/>
            <person name="Brinkman R."/>
            <person name="Cooper J."/>
            <person name="Ding H."/>
            <person name="Dover J."/>
            <person name="Du Z."/>
            <person name="Favello A."/>
            <person name="Fulton L."/>
            <person name="Gattung S."/>
            <person name="Geisel C."/>
            <person name="Kirsten J."/>
            <person name="Kucaba T."/>
            <person name="Hillier L.W."/>
            <person name="Jier M."/>
            <person name="Johnston L."/>
            <person name="Langston Y."/>
            <person name="Latreille P."/>
            <person name="Louis E.J."/>
            <person name="Macri C."/>
            <person name="Mardis E."/>
            <person name="Menezes S."/>
            <person name="Mouser L."/>
            <person name="Nhan M."/>
            <person name="Rifkin L."/>
            <person name="Riles L."/>
            <person name="St Peter H."/>
            <person name="Trevaskis E."/>
            <person name="Vaughan K."/>
            <person name="Vignati D."/>
            <person name="Wilcox L."/>
            <person name="Wohldman P."/>
            <person name="Waterston R."/>
            <person name="Wilson R."/>
            <person name="Vaudin M."/>
        </authorList>
    </citation>
    <scope>NUCLEOTIDE SEQUENCE [LARGE SCALE GENOMIC DNA]</scope>
    <source>
        <strain>ATCC 204508 / S288c</strain>
    </source>
</reference>
<reference key="4">
    <citation type="journal article" date="2014" name="G3 (Bethesda)">
        <title>The reference genome sequence of Saccharomyces cerevisiae: Then and now.</title>
        <authorList>
            <person name="Engel S.R."/>
            <person name="Dietrich F.S."/>
            <person name="Fisk D.G."/>
            <person name="Binkley G."/>
            <person name="Balakrishnan R."/>
            <person name="Costanzo M.C."/>
            <person name="Dwight S.S."/>
            <person name="Hitz B.C."/>
            <person name="Karra K."/>
            <person name="Nash R.S."/>
            <person name="Weng S."/>
            <person name="Wong E.D."/>
            <person name="Lloyd P."/>
            <person name="Skrzypek M.S."/>
            <person name="Miyasato S.R."/>
            <person name="Simison M."/>
            <person name="Cherry J.M."/>
        </authorList>
    </citation>
    <scope>GENOME REANNOTATION</scope>
    <source>
        <strain>ATCC 204508 / S288c</strain>
    </source>
</reference>
<reference key="5">
    <citation type="journal article" date="2002" name="Genome Res.">
        <title>Parallel identification of new genes in Saccharomyces cerevisiae.</title>
        <authorList>
            <person name="Oshiro G."/>
            <person name="Wodicka L.M."/>
            <person name="Washburn M.P."/>
            <person name="Yates J.R. III"/>
            <person name="Lockhart D.J."/>
            <person name="Winzeler E.A."/>
        </authorList>
    </citation>
    <scope>IDENTIFICATION</scope>
</reference>
<gene>
    <name type="ordered locus">YHR050W-A</name>
</gene>
<keyword id="KW-1185">Reference proteome</keyword>
<sequence length="56" mass="6578">MKRDLIGPVKALIKINNCSCLSRCQISRLPHFFTFHPHFSTLIYYYNLKNCITSET</sequence>